<comment type="catalytic activity">
    <reaction evidence="1 2 3 4 5 8">
        <text>tRNA(Gln) + L-glutamine + ATP = L-glutaminyl-tRNA(Gln) + AMP + diphosphate</text>
        <dbReference type="Rhea" id="RHEA:20121"/>
        <dbReference type="Rhea" id="RHEA-COMP:9662"/>
        <dbReference type="Rhea" id="RHEA-COMP:9681"/>
        <dbReference type="ChEBI" id="CHEBI:30616"/>
        <dbReference type="ChEBI" id="CHEBI:33019"/>
        <dbReference type="ChEBI" id="CHEBI:58359"/>
        <dbReference type="ChEBI" id="CHEBI:78442"/>
        <dbReference type="ChEBI" id="CHEBI:78521"/>
        <dbReference type="ChEBI" id="CHEBI:456215"/>
        <dbReference type="EC" id="6.1.1.18"/>
    </reaction>
</comment>
<comment type="subunit">
    <text evidence="1">Monomer.</text>
</comment>
<comment type="subcellular location">
    <subcellularLocation>
        <location evidence="1">Cytoplasm</location>
    </subcellularLocation>
</comment>
<comment type="similarity">
    <text evidence="1 9">Belongs to the class-I aminoacyl-tRNA synthetase family.</text>
</comment>
<feature type="initiator methionine" description="Removed" evidence="6 7">
    <location>
        <position position="1"/>
    </location>
</feature>
<feature type="chain" id="PRO_0000195833" description="Glutamine--tRNA ligase">
    <location>
        <begin position="2"/>
        <end position="554"/>
    </location>
</feature>
<feature type="region of interest" description="Interaction with tRNA" evidence="1 5 8">
    <location>
        <begin position="317"/>
        <end position="324"/>
    </location>
</feature>
<feature type="short sequence motif" description="'HIGH' region" evidence="1">
    <location>
        <begin position="34"/>
        <end position="44"/>
    </location>
</feature>
<feature type="short sequence motif" description="'KMSKS' region" evidence="1">
    <location>
        <begin position="268"/>
        <end position="272"/>
    </location>
</feature>
<feature type="binding site" evidence="1 5 19 20 21">
    <location>
        <begin position="35"/>
        <end position="37"/>
    </location>
    <ligand>
        <name>ATP</name>
        <dbReference type="ChEBI" id="CHEBI:30616"/>
    </ligand>
</feature>
<feature type="binding site" evidence="1 5 19 20 21">
    <location>
        <begin position="41"/>
        <end position="47"/>
    </location>
    <ligand>
        <name>ATP</name>
        <dbReference type="ChEBI" id="CHEBI:30616"/>
    </ligand>
</feature>
<feature type="binding site" evidence="1 2 4 8 13">
    <location>
        <position position="67"/>
    </location>
    <ligand>
        <name>L-glutamine</name>
        <dbReference type="ChEBI" id="CHEBI:58359"/>
    </ligand>
</feature>
<feature type="binding site" evidence="1 2 3 4 8 13 16">
    <location>
        <position position="212"/>
    </location>
    <ligand>
        <name>L-glutamine</name>
        <dbReference type="ChEBI" id="CHEBI:58359"/>
    </ligand>
</feature>
<feature type="binding site" evidence="1 4 5 8 19 20 21">
    <location>
        <position position="231"/>
    </location>
    <ligand>
        <name>ATP</name>
        <dbReference type="ChEBI" id="CHEBI:30616"/>
    </ligand>
</feature>
<feature type="binding site" evidence="1 4 5 8 19 20 21">
    <location>
        <begin position="261"/>
        <end position="262"/>
    </location>
    <ligand>
        <name>ATP</name>
        <dbReference type="ChEBI" id="CHEBI:30616"/>
    </ligand>
</feature>
<feature type="binding site" evidence="1 4 5 8 19 20 21">
    <location>
        <begin position="269"/>
        <end position="271"/>
    </location>
    <ligand>
        <name>ATP</name>
        <dbReference type="ChEBI" id="CHEBI:30616"/>
    </ligand>
</feature>
<feature type="mutagenesis site" description="Decreased affinity for glutamine and catalytic activity." evidence="4">
    <original>R</original>
    <variation>A</variation>
    <variation>K</variation>
    <location>
        <position position="31"/>
    </location>
</feature>
<feature type="mutagenesis site" description="Decreases catalytic activity 1000-fold, but has no effect on affinity for glutamine. Loss of catalytic activity; when associated with I-256." evidence="4">
    <original>C</original>
    <variation>R</variation>
    <location>
        <position position="230"/>
    </location>
</feature>
<feature type="mutagenesis site" description="Loss of catalytic activity; when associated with R-230." evidence="4">
    <original>Q</original>
    <variation>I</variation>
    <location>
        <position position="256"/>
    </location>
</feature>
<feature type="helix" evidence="23">
    <location>
        <begin position="11"/>
        <end position="21"/>
    </location>
</feature>
<feature type="strand" evidence="23">
    <location>
        <begin position="29"/>
        <end position="32"/>
    </location>
</feature>
<feature type="strand" evidence="24">
    <location>
        <begin position="36"/>
        <end position="38"/>
    </location>
</feature>
<feature type="helix" evidence="23">
    <location>
        <begin position="42"/>
        <end position="57"/>
    </location>
</feature>
<feature type="strand" evidence="23">
    <location>
        <begin position="61"/>
        <end position="66"/>
    </location>
</feature>
<feature type="helix" evidence="23">
    <location>
        <begin position="71"/>
        <end position="73"/>
    </location>
</feature>
<feature type="helix" evidence="23">
    <location>
        <begin position="76"/>
        <end position="88"/>
    </location>
</feature>
<feature type="strand" evidence="23">
    <location>
        <begin position="94"/>
        <end position="96"/>
    </location>
</feature>
<feature type="helix" evidence="23">
    <location>
        <begin position="100"/>
        <end position="103"/>
    </location>
</feature>
<feature type="helix" evidence="23">
    <location>
        <begin position="104"/>
        <end position="116"/>
    </location>
</feature>
<feature type="strand" evidence="23">
    <location>
        <begin position="119"/>
        <end position="123"/>
    </location>
</feature>
<feature type="helix" evidence="23">
    <location>
        <begin position="127"/>
        <end position="134"/>
    </location>
</feature>
<feature type="strand" evidence="23">
    <location>
        <begin position="137"/>
        <end position="139"/>
    </location>
</feature>
<feature type="turn" evidence="23">
    <location>
        <begin position="145"/>
        <end position="148"/>
    </location>
</feature>
<feature type="helix" evidence="23">
    <location>
        <begin position="151"/>
        <end position="162"/>
    </location>
</feature>
<feature type="strand" evidence="23">
    <location>
        <begin position="172"/>
        <end position="175"/>
    </location>
</feature>
<feature type="helix" evidence="23">
    <location>
        <begin position="184"/>
        <end position="186"/>
    </location>
</feature>
<feature type="strand" evidence="23">
    <location>
        <begin position="190"/>
        <end position="194"/>
    </location>
</feature>
<feature type="turn" evidence="23">
    <location>
        <begin position="200"/>
        <end position="202"/>
    </location>
</feature>
<feature type="strand" evidence="23">
    <location>
        <begin position="207"/>
        <end position="210"/>
    </location>
</feature>
<feature type="helix" evidence="23">
    <location>
        <begin position="212"/>
        <end position="222"/>
    </location>
</feature>
<feature type="strand" evidence="23">
    <location>
        <begin position="226"/>
        <end position="231"/>
    </location>
</feature>
<feature type="helix" evidence="23">
    <location>
        <begin position="232"/>
        <end position="234"/>
    </location>
</feature>
<feature type="turn" evidence="23">
    <location>
        <begin position="235"/>
        <end position="237"/>
    </location>
</feature>
<feature type="helix" evidence="23">
    <location>
        <begin position="238"/>
        <end position="246"/>
    </location>
</feature>
<feature type="strand" evidence="23">
    <location>
        <begin position="255"/>
        <end position="259"/>
    </location>
</feature>
<feature type="strand" evidence="22">
    <location>
        <begin position="264"/>
        <end position="267"/>
    </location>
</feature>
<feature type="helix" evidence="23">
    <location>
        <begin position="271"/>
        <end position="279"/>
    </location>
</feature>
<feature type="strand" evidence="23">
    <location>
        <begin position="282"/>
        <end position="284"/>
    </location>
</feature>
<feature type="strand" evidence="24">
    <location>
        <begin position="291"/>
        <end position="293"/>
    </location>
</feature>
<feature type="helix" evidence="23">
    <location>
        <begin position="294"/>
        <end position="300"/>
    </location>
</feature>
<feature type="helix" evidence="23">
    <location>
        <begin position="304"/>
        <end position="314"/>
    </location>
</feature>
<feature type="helix" evidence="23">
    <location>
        <begin position="325"/>
        <end position="339"/>
    </location>
</feature>
<feature type="strand" evidence="23">
    <location>
        <begin position="345"/>
        <end position="354"/>
    </location>
</feature>
<feature type="strand" evidence="23">
    <location>
        <begin position="362"/>
        <end position="368"/>
    </location>
</feature>
<feature type="helix" evidence="23">
    <location>
        <begin position="373"/>
        <end position="375"/>
    </location>
</feature>
<feature type="strand" evidence="23">
    <location>
        <begin position="377"/>
        <end position="382"/>
    </location>
</feature>
<feature type="strand" evidence="23">
    <location>
        <begin position="384"/>
        <end position="389"/>
    </location>
</feature>
<feature type="turn" evidence="23">
    <location>
        <begin position="390"/>
        <end position="392"/>
    </location>
</feature>
<feature type="strand" evidence="23">
    <location>
        <begin position="393"/>
        <end position="396"/>
    </location>
</feature>
<feature type="strand" evidence="23">
    <location>
        <begin position="403"/>
        <end position="405"/>
    </location>
</feature>
<feature type="strand" evidence="23">
    <location>
        <begin position="408"/>
        <end position="412"/>
    </location>
</feature>
<feature type="strand" evidence="23">
    <location>
        <begin position="417"/>
        <end position="424"/>
    </location>
</feature>
<feature type="strand" evidence="23">
    <location>
        <begin position="427"/>
        <end position="429"/>
    </location>
</feature>
<feature type="strand" evidence="23">
    <location>
        <begin position="433"/>
        <end position="436"/>
    </location>
</feature>
<feature type="strand" evidence="23">
    <location>
        <begin position="460"/>
        <end position="462"/>
    </location>
</feature>
<feature type="strand" evidence="23">
    <location>
        <begin position="466"/>
        <end position="473"/>
    </location>
</feature>
<feature type="strand" evidence="23">
    <location>
        <begin position="476"/>
        <end position="480"/>
    </location>
</feature>
<feature type="helix" evidence="23">
    <location>
        <begin position="482"/>
        <end position="484"/>
    </location>
</feature>
<feature type="strand" evidence="24">
    <location>
        <begin position="485"/>
        <end position="487"/>
    </location>
</feature>
<feature type="helix" evidence="23">
    <location>
        <begin position="488"/>
        <end position="491"/>
    </location>
</feature>
<feature type="strand" evidence="23">
    <location>
        <begin position="496"/>
        <end position="504"/>
    </location>
</feature>
<feature type="helix" evidence="23">
    <location>
        <begin position="506"/>
        <end position="510"/>
    </location>
</feature>
<feature type="strand" evidence="23">
    <location>
        <begin position="516"/>
        <end position="519"/>
    </location>
</feature>
<feature type="turn" evidence="23">
    <location>
        <begin position="520"/>
        <end position="522"/>
    </location>
</feature>
<feature type="strand" evidence="23">
    <location>
        <begin position="523"/>
        <end position="527"/>
    </location>
</feature>
<feature type="turn" evidence="23">
    <location>
        <begin position="529"/>
        <end position="531"/>
    </location>
</feature>
<feature type="strand" evidence="23">
    <location>
        <begin position="534"/>
        <end position="536"/>
    </location>
</feature>
<feature type="strand" evidence="23">
    <location>
        <begin position="538"/>
        <end position="544"/>
    </location>
</feature>
<organism>
    <name type="scientific">Escherichia coli (strain K12)</name>
    <dbReference type="NCBI Taxonomy" id="83333"/>
    <lineage>
        <taxon>Bacteria</taxon>
        <taxon>Pseudomonadati</taxon>
        <taxon>Pseudomonadota</taxon>
        <taxon>Gammaproteobacteria</taxon>
        <taxon>Enterobacterales</taxon>
        <taxon>Enterobacteriaceae</taxon>
        <taxon>Escherichia</taxon>
    </lineage>
</organism>
<sequence>MSEAEARPTNFIRQIIDEDLASGKHTTVHTRFPPEPNGYLHIGHAKSICLNFGIAQDYKGQCNLRFDDTNPVKEDIEYVESIKNDVEWLGFHWSGNVRYSSDYFDQLHAYAIELINKGLAYVDELTPEQIREYRGTLTQPGKNSPYRDRSVEENLALFEKMRAGGFEEGKACLRAKIDMASPFIVMRDPVLYRIKFAEHHQTGNKWCIYPMYDFTHCISDALEGITHSLCTLEFQDNRRLYDWVLDNITIPVHPRQYEFSRLNLEYTVMSKRKLNLLVTDKHVEGWDDPRMPTISGLRRRGYTAASIREFCKRIGVTKQDNTIEMASLESCIREDLNENAPRAMAVIDPVKLVIENYQGEGEMVTMPNHPNKPEMGSRQVPFSGEIWIDRADFREEANKQYKRLVLGKEVRLRNAYVIKAERVEKDAEGNITTIFCTYDADTLSKDPADGRKVKGVIHWVSAAHALPVEIRLYDRLFSVPNPGAADDFLSVINPESLVIKQGFAEPSLKDAVAGKAFQFEREGYFCLDSRHSTAEKPVFNRTVGLRDTWAKVGE</sequence>
<reference key="1">
    <citation type="journal article" date="1988" name="Protein Seq. Data Anal.">
        <title>Escherichia coli glutaminyl-tRNA synthetase: a single amino acid replacement relaxes rRNA specificity.</title>
        <authorList>
            <person name="Uemura H."/>
            <person name="Conley J."/>
            <person name="Yamao F."/>
            <person name="Rogers J."/>
            <person name="Soell D.G."/>
        </authorList>
    </citation>
    <scope>NUCLEOTIDE SEQUENCE [GENOMIC DNA]</scope>
</reference>
<reference key="2">
    <citation type="journal article" date="1982" name="J. Biol. Chem.">
        <title>Escherichia coli glutaminyl-tRNA synthetase. I. Isolation and DNA sequence of the glnS gene.</title>
        <authorList>
            <person name="Yamao F."/>
            <person name="Inokuchi H."/>
            <person name="Cheung A."/>
            <person name="Ozeki H."/>
            <person name="Soell D.G."/>
        </authorList>
    </citation>
    <scope>NUCLEOTIDE SEQUENCE [GENOMIC DNA]</scope>
    <source>
        <strain>K12</strain>
    </source>
</reference>
<reference key="3">
    <citation type="journal article" date="1996" name="DNA Res.">
        <title>A 718-kb DNA sequence of the Escherichia coli K-12 genome corresponding to the 12.7-28.0 min region on the linkage map.</title>
        <authorList>
            <person name="Oshima T."/>
            <person name="Aiba H."/>
            <person name="Baba T."/>
            <person name="Fujita K."/>
            <person name="Hayashi K."/>
            <person name="Honjo A."/>
            <person name="Ikemoto K."/>
            <person name="Inada T."/>
            <person name="Itoh T."/>
            <person name="Kajihara M."/>
            <person name="Kanai K."/>
            <person name="Kashimoto K."/>
            <person name="Kimura S."/>
            <person name="Kitagawa M."/>
            <person name="Makino K."/>
            <person name="Masuda S."/>
            <person name="Miki T."/>
            <person name="Mizobuchi K."/>
            <person name="Mori H."/>
            <person name="Motomura K."/>
            <person name="Nakamura Y."/>
            <person name="Nashimoto H."/>
            <person name="Nishio Y."/>
            <person name="Saito N."/>
            <person name="Sampei G."/>
            <person name="Seki Y."/>
            <person name="Tagami H."/>
            <person name="Takemoto K."/>
            <person name="Wada C."/>
            <person name="Yamamoto Y."/>
            <person name="Yano M."/>
            <person name="Horiuchi T."/>
        </authorList>
    </citation>
    <scope>NUCLEOTIDE SEQUENCE [LARGE SCALE GENOMIC DNA]</scope>
    <source>
        <strain>K12 / W3110 / ATCC 27325 / DSM 5911</strain>
    </source>
</reference>
<reference evidence="11" key="4">
    <citation type="journal article" date="1997" name="Science">
        <title>The complete genome sequence of Escherichia coli K-12.</title>
        <authorList>
            <person name="Blattner F.R."/>
            <person name="Plunkett G. III"/>
            <person name="Bloch C.A."/>
            <person name="Perna N.T."/>
            <person name="Burland V."/>
            <person name="Riley M."/>
            <person name="Collado-Vides J."/>
            <person name="Glasner J.D."/>
            <person name="Rode C.K."/>
            <person name="Mayhew G.F."/>
            <person name="Gregor J."/>
            <person name="Davis N.W."/>
            <person name="Kirkpatrick H.A."/>
            <person name="Goeden M.A."/>
            <person name="Rose D.J."/>
            <person name="Mau B."/>
            <person name="Shao Y."/>
        </authorList>
    </citation>
    <scope>NUCLEOTIDE SEQUENCE [LARGE SCALE GENOMIC DNA]</scope>
    <source>
        <strain>K12 / MG1655 / ATCC 47076</strain>
    </source>
</reference>
<reference evidence="12" key="5">
    <citation type="journal article" date="2006" name="Mol. Syst. Biol.">
        <title>Highly accurate genome sequences of Escherichia coli K-12 strains MG1655 and W3110.</title>
        <authorList>
            <person name="Hayashi K."/>
            <person name="Morooka N."/>
            <person name="Yamamoto Y."/>
            <person name="Fujita K."/>
            <person name="Isono K."/>
            <person name="Choi S."/>
            <person name="Ohtsubo E."/>
            <person name="Baba T."/>
            <person name="Wanner B.L."/>
            <person name="Mori H."/>
            <person name="Horiuchi T."/>
        </authorList>
    </citation>
    <scope>NUCLEOTIDE SEQUENCE [LARGE SCALE GENOMIC DNA]</scope>
    <source>
        <strain>K12 / W3110 / ATCC 27325 / DSM 5911</strain>
    </source>
</reference>
<reference evidence="10" key="6">
    <citation type="journal article" date="1984" name="Fed. Proc.">
        <title>Misaminoacylation by glutaminyl-tRNA synthetase: relaxed specificity in wild-type and mutant enzymes.</title>
        <authorList>
            <person name="Hoben P."/>
            <person name="Uemura H."/>
            <person name="Yamao F."/>
            <person name="Cheung A."/>
            <person name="Swanson R."/>
            <person name="Sumner-Smith M."/>
            <person name="Soell D."/>
        </authorList>
    </citation>
    <scope>NUCLEOTIDE SEQUENCE [GENOMIC DNA] OF 1-5</scope>
</reference>
<reference key="7">
    <citation type="journal article" date="1997" name="Electrophoresis">
        <title>Comparing the predicted and observed properties of proteins encoded in the genome of Escherichia coli K-12.</title>
        <authorList>
            <person name="Link A.J."/>
            <person name="Robison K."/>
            <person name="Church G.M."/>
        </authorList>
    </citation>
    <scope>PROTEIN SEQUENCE OF 2-13</scope>
    <source>
        <strain>K12 / EMG2</strain>
    </source>
</reference>
<reference key="8">
    <citation type="journal article" date="1982" name="J. Biol. Chem.">
        <title>Escherichia coli glutaminyl-tRNA synthetase. II. Characterization of the glnS gene product.</title>
        <authorList>
            <person name="Hoben P."/>
            <person name="Royal N."/>
            <person name="Cheung A."/>
            <person name="Yamao F."/>
            <person name="Biemann K."/>
            <person name="Soell D."/>
        </authorList>
    </citation>
    <scope>PROTEIN SEQUENCE OF 2-6</scope>
    <scope>CHARACTERIZATION</scope>
    <source>
        <strain>K12</strain>
    </source>
</reference>
<reference key="9">
    <citation type="journal article" date="1997" name="Electrophoresis">
        <title>Escherichia coli proteome analysis using the gene-protein database.</title>
        <authorList>
            <person name="VanBogelen R.A."/>
            <person name="Abshire K.Z."/>
            <person name="Moldover B."/>
            <person name="Olson E.R."/>
            <person name="Neidhardt F.C."/>
        </authorList>
    </citation>
    <scope>IDENTIFICATION BY 2D-GEL</scope>
</reference>
<reference key="10">
    <citation type="journal article" date="1989" name="Science">
        <title>Structure of E. coli glutaminyl-tRNA synthetase complexed with tRNA(Gln) and ATP at 2.8-A resolution.</title>
        <authorList>
            <person name="Rould M.A."/>
            <person name="Perona J.J."/>
            <person name="Soell D."/>
            <person name="Steitz T.A."/>
        </authorList>
    </citation>
    <scope>X-RAY CRYSTALLOGRAPHY (2.8 ANGSTROMS)</scope>
</reference>
<reference key="11">
    <citation type="journal article" date="1991" name="Nature">
        <title>Structural basis of anticodon loop recognition by glutaminyl-tRNA synthetase.</title>
        <authorList>
            <person name="Rould M.A."/>
            <person name="Perona J.J."/>
            <person name="Steitz T.A."/>
        </authorList>
    </citation>
    <scope>X-RAY CRYSTALLOGRAPHY (2.5 ANGSTROMS)</scope>
</reference>
<reference evidence="15" key="12">
    <citation type="journal article" date="1998" name="Structure">
        <title>How glutaminyl-tRNA synthetase selects glutamine.</title>
        <authorList>
            <person name="Rath V.L."/>
            <person name="Silvian L.F."/>
            <person name="Beijer B."/>
            <person name="Sproat B.S."/>
            <person name="Steitz T.A."/>
        </authorList>
    </citation>
    <scope>X-RAY CRYSTALLOGRAPHY (2.25 ANGSTROMS) IN COMPLEX WITH GLUTAMINYL-ADENYLATE ANALOG AND RNA</scope>
    <scope>CATALYTIC ACTIVITY</scope>
</reference>
<reference key="13">
    <citation type="journal article" date="2000" name="J. Mol. Biol.">
        <title>Influence of transfer RNA tertiary structure on aminoacylation efficiency by glutaminyl and cysteinyl-tRNA synthetases.</title>
        <authorList>
            <person name="Sherlin L.D."/>
            <person name="Bullock T.L."/>
            <person name="Newberry K.J."/>
            <person name="Lipman R.S."/>
            <person name="Hou Y.M."/>
            <person name="Beijer B."/>
            <person name="Sproat B.S."/>
            <person name="Perona J.J."/>
        </authorList>
    </citation>
    <scope>X-RAY CRYSTALLOGRAPHY (2.6 ANGSTROMS)</scope>
</reference>
<reference evidence="13 14" key="14">
    <citation type="journal article" date="2003" name="J. Mol. Biol.">
        <title>Amino acid discrimination by a class I aminoacyl-tRNA synthetase specified by negative determinants.</title>
        <authorList>
            <person name="Bullock T.L."/>
            <person name="Uter N."/>
            <person name="Nissan T.A."/>
            <person name="Perona J.J."/>
        </authorList>
    </citation>
    <scope>X-RAY CRYSTALLOGRAPHY (2.70 ANGSTROMS) OF 2-554 IN COMPLEX WITH AMP AND L-GLUTAMINE</scope>
    <scope>CATALYTIC ACTIVITY</scope>
</reference>
<reference evidence="16" key="15">
    <citation type="journal article" date="2005" name="J. Biol. Chem.">
        <title>tRNA-dependent aminoacyl-adenylate hydrolysis by a nonediting class I aminoacyl-tRNA synthetase.</title>
        <authorList>
            <person name="Gruic-Sovulj I."/>
            <person name="Uter N."/>
            <person name="Bullock T."/>
            <person name="Perona J.J."/>
        </authorList>
    </citation>
    <scope>X-RAY CRYSTALLOGRAPHY (2.50 ANGSTROMS) OF 2-554 IN COMPLEX WITH AMP AND L-GLUTAMINE</scope>
    <scope>CATALYTIC ACTIVITY</scope>
</reference>
<reference evidence="17 18" key="16">
    <citation type="journal article" date="2008" name="Proc. Natl. Acad. Sci. U.S.A.">
        <title>A rationally engineered misacylating aminoacyl-tRNA synthetase.</title>
        <authorList>
            <person name="Bullock T.L."/>
            <person name="Rodriguez-Hernandez A."/>
            <person name="Corigliano E.M."/>
            <person name="Perona J.J."/>
        </authorList>
    </citation>
    <scope>X-RAY CRYSTALLOGRAPHY (2.60 ANGSTROMS) OF 1-548 IN COMPLEX WITH GLUTAMINYL-ADENYLATE ANALOG</scope>
    <scope>CATALYTIC ACTIVITY</scope>
    <scope>MUTAGENESIS OF ARG-31; CYS-230 AND GLN-256</scope>
</reference>
<reference evidence="19 20 21" key="17">
    <citation type="journal article" date="2013" name="J. Mol. Biol.">
        <title>Structural and mechanistic basis for enhanced translational efficiency by 2-thiouridine at the tRNA anticodon wobble position.</title>
        <authorList>
            <person name="Rodriguez-Hernandez A."/>
            <person name="Spears J.L."/>
            <person name="Gaston K.W."/>
            <person name="Limbach P.A."/>
            <person name="Gamper H."/>
            <person name="Hou Y.M."/>
            <person name="Kaiser R."/>
            <person name="Agris P.F."/>
            <person name="Perona J.J."/>
        </authorList>
    </citation>
    <scope>X-RAY CRYSTALLOGRAPHY (2.30 ANGSTROMS) OF 2-554 IN COMPLEX WITH ATP AND RNA</scope>
    <scope>CATALYTIC ACTIVITY</scope>
</reference>
<keyword id="KW-0002">3D-structure</keyword>
<keyword id="KW-0030">Aminoacyl-tRNA synthetase</keyword>
<keyword id="KW-0067">ATP-binding</keyword>
<keyword id="KW-0963">Cytoplasm</keyword>
<keyword id="KW-0903">Direct protein sequencing</keyword>
<keyword id="KW-0436">Ligase</keyword>
<keyword id="KW-0547">Nucleotide-binding</keyword>
<keyword id="KW-0648">Protein biosynthesis</keyword>
<keyword id="KW-1185">Reference proteome</keyword>
<proteinExistence type="evidence at protein level"/>
<dbReference type="EC" id="6.1.1.18" evidence="1 2 3 4 5 8"/>
<dbReference type="EMBL" id="V01575">
    <property type="protein sequence ID" value="CAA24894.1"/>
    <property type="molecule type" value="Genomic_DNA"/>
</dbReference>
<dbReference type="EMBL" id="U00096">
    <property type="protein sequence ID" value="AAC73774.1"/>
    <property type="molecule type" value="Genomic_DNA"/>
</dbReference>
<dbReference type="EMBL" id="AP009048">
    <property type="protein sequence ID" value="BAA35328.1"/>
    <property type="molecule type" value="Genomic_DNA"/>
</dbReference>
<dbReference type="EMBL" id="AH003126">
    <property type="protein sequence ID" value="AAA69006.2"/>
    <property type="molecule type" value="Genomic_DNA"/>
</dbReference>
<dbReference type="EMBL" id="M16368">
    <property type="protein sequence ID" value="AAA69006.2"/>
    <property type="status" value="JOINED"/>
    <property type="molecule type" value="Genomic_DNA"/>
</dbReference>
<dbReference type="PIR" id="G64802">
    <property type="entry name" value="SYECQT"/>
</dbReference>
<dbReference type="PIR" id="I41235">
    <property type="entry name" value="I41235"/>
</dbReference>
<dbReference type="RefSeq" id="NP_415206.1">
    <property type="nucleotide sequence ID" value="NC_000913.3"/>
</dbReference>
<dbReference type="RefSeq" id="WP_001287154.1">
    <property type="nucleotide sequence ID" value="NZ_STEB01000044.1"/>
</dbReference>
<dbReference type="PDB" id="1EUQ">
    <property type="method" value="X-ray"/>
    <property type="resolution" value="3.10 A"/>
    <property type="chains" value="A=1-548"/>
</dbReference>
<dbReference type="PDB" id="1EUY">
    <property type="method" value="X-ray"/>
    <property type="resolution" value="2.60 A"/>
    <property type="chains" value="A=1-548"/>
</dbReference>
<dbReference type="PDB" id="1EXD">
    <property type="method" value="X-ray"/>
    <property type="resolution" value="2.70 A"/>
    <property type="chains" value="A=1-548"/>
</dbReference>
<dbReference type="PDB" id="1GSG">
    <property type="method" value="X-ray"/>
    <property type="resolution" value="2.80 A"/>
    <property type="chains" value="P=2-554"/>
</dbReference>
<dbReference type="PDB" id="1GTR">
    <property type="method" value="X-ray"/>
    <property type="resolution" value="2.50 A"/>
    <property type="chains" value="A=2-554"/>
</dbReference>
<dbReference type="PDB" id="1GTS">
    <property type="method" value="X-ray"/>
    <property type="resolution" value="2.80 A"/>
    <property type="chains" value="A=2-554"/>
</dbReference>
<dbReference type="PDB" id="1NYL">
    <property type="method" value="X-ray"/>
    <property type="resolution" value="2.60 A"/>
    <property type="chains" value="A=9-547"/>
</dbReference>
<dbReference type="PDB" id="1O0B">
    <property type="method" value="X-ray"/>
    <property type="resolution" value="2.70 A"/>
    <property type="chains" value="A=2-554"/>
</dbReference>
<dbReference type="PDB" id="1O0C">
    <property type="method" value="X-ray"/>
    <property type="resolution" value="2.70 A"/>
    <property type="chains" value="A=2-554"/>
</dbReference>
<dbReference type="PDB" id="1QRS">
    <property type="method" value="X-ray"/>
    <property type="resolution" value="2.60 A"/>
    <property type="chains" value="A=2-554"/>
</dbReference>
<dbReference type="PDB" id="1QRT">
    <property type="method" value="X-ray"/>
    <property type="resolution" value="2.70 A"/>
    <property type="chains" value="A=2-554"/>
</dbReference>
<dbReference type="PDB" id="1QRU">
    <property type="method" value="X-ray"/>
    <property type="resolution" value="3.00 A"/>
    <property type="chains" value="A=2-554"/>
</dbReference>
<dbReference type="PDB" id="1QTQ">
    <property type="method" value="X-ray"/>
    <property type="resolution" value="2.25 A"/>
    <property type="chains" value="A=2-554"/>
</dbReference>
<dbReference type="PDB" id="1ZJW">
    <property type="method" value="X-ray"/>
    <property type="resolution" value="2.50 A"/>
    <property type="chains" value="A=2-554"/>
</dbReference>
<dbReference type="PDB" id="2RD2">
    <property type="method" value="X-ray"/>
    <property type="resolution" value="2.60 A"/>
    <property type="chains" value="A=1-548"/>
</dbReference>
<dbReference type="PDB" id="2RE8">
    <property type="method" value="X-ray"/>
    <property type="resolution" value="2.60 A"/>
    <property type="chains" value="A=1-548"/>
</dbReference>
<dbReference type="PDB" id="4JXX">
    <property type="method" value="X-ray"/>
    <property type="resolution" value="2.30 A"/>
    <property type="chains" value="A=2-554"/>
</dbReference>
<dbReference type="PDB" id="4JXZ">
    <property type="method" value="X-ray"/>
    <property type="resolution" value="2.40 A"/>
    <property type="chains" value="A=2-554"/>
</dbReference>
<dbReference type="PDB" id="4JYZ">
    <property type="method" value="X-ray"/>
    <property type="resolution" value="2.50 A"/>
    <property type="chains" value="A=2-554"/>
</dbReference>
<dbReference type="PDBsum" id="1EUQ"/>
<dbReference type="PDBsum" id="1EUY"/>
<dbReference type="PDBsum" id="1EXD"/>
<dbReference type="PDBsum" id="1GSG"/>
<dbReference type="PDBsum" id="1GTR"/>
<dbReference type="PDBsum" id="1GTS"/>
<dbReference type="PDBsum" id="1NYL"/>
<dbReference type="PDBsum" id="1O0B"/>
<dbReference type="PDBsum" id="1O0C"/>
<dbReference type="PDBsum" id="1QRS"/>
<dbReference type="PDBsum" id="1QRT"/>
<dbReference type="PDBsum" id="1QRU"/>
<dbReference type="PDBsum" id="1QTQ"/>
<dbReference type="PDBsum" id="1ZJW"/>
<dbReference type="PDBsum" id="2RD2"/>
<dbReference type="PDBsum" id="2RE8"/>
<dbReference type="PDBsum" id="4JXX"/>
<dbReference type="PDBsum" id="4JXZ"/>
<dbReference type="PDBsum" id="4JYZ"/>
<dbReference type="SMR" id="P00962"/>
<dbReference type="BioGRID" id="4261207">
    <property type="interactions" value="56"/>
</dbReference>
<dbReference type="DIP" id="DIP-9787N"/>
<dbReference type="FunCoup" id="P00962">
    <property type="interactions" value="736"/>
</dbReference>
<dbReference type="IntAct" id="P00962">
    <property type="interactions" value="5"/>
</dbReference>
<dbReference type="STRING" id="511145.b0680"/>
<dbReference type="BindingDB" id="P00962"/>
<dbReference type="ChEMBL" id="CHEMBL5291592"/>
<dbReference type="jPOST" id="P00962"/>
<dbReference type="PaxDb" id="511145-b0680"/>
<dbReference type="EnsemblBacteria" id="AAC73774">
    <property type="protein sequence ID" value="AAC73774"/>
    <property type="gene ID" value="b0680"/>
</dbReference>
<dbReference type="GeneID" id="93776805"/>
<dbReference type="GeneID" id="945310"/>
<dbReference type="KEGG" id="ecj:JW0666"/>
<dbReference type="KEGG" id="eco:b0680"/>
<dbReference type="KEGG" id="ecoc:C3026_03380"/>
<dbReference type="PATRIC" id="fig|1411691.4.peg.1596"/>
<dbReference type="EchoBASE" id="EB0385"/>
<dbReference type="eggNOG" id="COG0008">
    <property type="taxonomic scope" value="Bacteria"/>
</dbReference>
<dbReference type="HOGENOM" id="CLU_001882_2_3_6"/>
<dbReference type="InParanoid" id="P00962"/>
<dbReference type="OMA" id="TWCIYPM"/>
<dbReference type="OrthoDB" id="9801560at2"/>
<dbReference type="PhylomeDB" id="P00962"/>
<dbReference type="BioCyc" id="EcoCyc:GLNS-MONOMER"/>
<dbReference type="BioCyc" id="MetaCyc:GLNS-MONOMER"/>
<dbReference type="BRENDA" id="6.1.1.18">
    <property type="organism ID" value="2026"/>
</dbReference>
<dbReference type="BRENDA" id="6.1.1.24">
    <property type="organism ID" value="2026"/>
</dbReference>
<dbReference type="SABIO-RK" id="P00962"/>
<dbReference type="EvolutionaryTrace" id="P00962"/>
<dbReference type="PRO" id="PR:P00962"/>
<dbReference type="Proteomes" id="UP000000625">
    <property type="component" value="Chromosome"/>
</dbReference>
<dbReference type="GO" id="GO:0005829">
    <property type="term" value="C:cytosol"/>
    <property type="evidence" value="ECO:0000314"/>
    <property type="project" value="EcoCyc"/>
</dbReference>
<dbReference type="GO" id="GO:0005524">
    <property type="term" value="F:ATP binding"/>
    <property type="evidence" value="ECO:0007669"/>
    <property type="project" value="UniProtKB-UniRule"/>
</dbReference>
<dbReference type="GO" id="GO:0004819">
    <property type="term" value="F:glutamine-tRNA ligase activity"/>
    <property type="evidence" value="ECO:0000314"/>
    <property type="project" value="EcoCyc"/>
</dbReference>
<dbReference type="GO" id="GO:0006425">
    <property type="term" value="P:glutaminyl-tRNA aminoacylation"/>
    <property type="evidence" value="ECO:0000314"/>
    <property type="project" value="EcoCyc"/>
</dbReference>
<dbReference type="GO" id="GO:0006424">
    <property type="term" value="P:glutamyl-tRNA aminoacylation"/>
    <property type="evidence" value="ECO:0007669"/>
    <property type="project" value="UniProtKB-UniRule"/>
</dbReference>
<dbReference type="CDD" id="cd00807">
    <property type="entry name" value="GlnRS_core"/>
    <property type="match status" value="1"/>
</dbReference>
<dbReference type="FunFam" id="1.10.1160.10:FF:000001">
    <property type="entry name" value="Glutamine--tRNA ligase"/>
    <property type="match status" value="1"/>
</dbReference>
<dbReference type="FunFam" id="2.40.240.10:FF:000001">
    <property type="entry name" value="Glutamine--tRNA ligase"/>
    <property type="match status" value="1"/>
</dbReference>
<dbReference type="FunFam" id="2.40.240.10:FF:000003">
    <property type="entry name" value="Glutamine--tRNA ligase"/>
    <property type="match status" value="1"/>
</dbReference>
<dbReference type="FunFam" id="3.90.800.10:FF:000001">
    <property type="entry name" value="Glutamine--tRNA ligase"/>
    <property type="match status" value="1"/>
</dbReference>
<dbReference type="FunFam" id="3.40.50.620:FF:000037">
    <property type="entry name" value="Glutamine--tRNA ligase cytoplasmic"/>
    <property type="match status" value="1"/>
</dbReference>
<dbReference type="Gene3D" id="1.10.1160.10">
    <property type="entry name" value="Glutamyl-trna Synthetase, Domain 2"/>
    <property type="match status" value="1"/>
</dbReference>
<dbReference type="Gene3D" id="3.90.800.10">
    <property type="entry name" value="Glutamyl-tRNA Synthetase, Domain 3"/>
    <property type="match status" value="1"/>
</dbReference>
<dbReference type="Gene3D" id="3.40.50.620">
    <property type="entry name" value="HUPs"/>
    <property type="match status" value="1"/>
</dbReference>
<dbReference type="Gene3D" id="2.40.240.10">
    <property type="entry name" value="Ribosomal Protein L25, Chain P"/>
    <property type="match status" value="2"/>
</dbReference>
<dbReference type="HAMAP" id="MF_00126">
    <property type="entry name" value="Gln_tRNA_synth"/>
    <property type="match status" value="1"/>
</dbReference>
<dbReference type="InterPro" id="IPR001412">
    <property type="entry name" value="aa-tRNA-synth_I_CS"/>
</dbReference>
<dbReference type="InterPro" id="IPR004514">
    <property type="entry name" value="Gln-tRNA-synth"/>
</dbReference>
<dbReference type="InterPro" id="IPR050132">
    <property type="entry name" value="Gln/Glu-tRNA_Ligase"/>
</dbReference>
<dbReference type="InterPro" id="IPR022861">
    <property type="entry name" value="Gln_tRNA_ligase_bac"/>
</dbReference>
<dbReference type="InterPro" id="IPR000924">
    <property type="entry name" value="Glu/Gln-tRNA-synth"/>
</dbReference>
<dbReference type="InterPro" id="IPR020058">
    <property type="entry name" value="Glu/Gln-tRNA-synth_Ib_cat-dom"/>
</dbReference>
<dbReference type="InterPro" id="IPR020059">
    <property type="entry name" value="Glu/Gln-tRNA-synth_Ib_codon-bd"/>
</dbReference>
<dbReference type="InterPro" id="IPR020061">
    <property type="entry name" value="Glu_tRNA_lig_a-bdl"/>
</dbReference>
<dbReference type="InterPro" id="IPR020056">
    <property type="entry name" value="Rbsml_bL25/Gln-tRNA_synth_N"/>
</dbReference>
<dbReference type="InterPro" id="IPR011035">
    <property type="entry name" value="Ribosomal_bL25/Gln-tRNA_synth"/>
</dbReference>
<dbReference type="InterPro" id="IPR014729">
    <property type="entry name" value="Rossmann-like_a/b/a_fold"/>
</dbReference>
<dbReference type="InterPro" id="IPR049437">
    <property type="entry name" value="tRNA-synt_1c_C2"/>
</dbReference>
<dbReference type="NCBIfam" id="TIGR00440">
    <property type="entry name" value="glnS"/>
    <property type="match status" value="1"/>
</dbReference>
<dbReference type="NCBIfam" id="NF011291">
    <property type="entry name" value="PRK14703.1"/>
    <property type="match status" value="1"/>
</dbReference>
<dbReference type="PANTHER" id="PTHR43097:SF5">
    <property type="entry name" value="GLUTAMATE--TRNA LIGASE"/>
    <property type="match status" value="1"/>
</dbReference>
<dbReference type="PANTHER" id="PTHR43097">
    <property type="entry name" value="GLUTAMINE-TRNA LIGASE"/>
    <property type="match status" value="1"/>
</dbReference>
<dbReference type="Pfam" id="PF00749">
    <property type="entry name" value="tRNA-synt_1c"/>
    <property type="match status" value="1"/>
</dbReference>
<dbReference type="Pfam" id="PF03950">
    <property type="entry name" value="tRNA-synt_1c_C"/>
    <property type="match status" value="1"/>
</dbReference>
<dbReference type="Pfam" id="PF20974">
    <property type="entry name" value="tRNA-synt_1c_C2"/>
    <property type="match status" value="1"/>
</dbReference>
<dbReference type="PRINTS" id="PR00987">
    <property type="entry name" value="TRNASYNTHGLU"/>
</dbReference>
<dbReference type="SUPFAM" id="SSF52374">
    <property type="entry name" value="Nucleotidylyl transferase"/>
    <property type="match status" value="1"/>
</dbReference>
<dbReference type="SUPFAM" id="SSF50715">
    <property type="entry name" value="Ribosomal protein L25-like"/>
    <property type="match status" value="1"/>
</dbReference>
<dbReference type="PROSITE" id="PS00178">
    <property type="entry name" value="AA_TRNA_LIGASE_I"/>
    <property type="match status" value="1"/>
</dbReference>
<gene>
    <name evidence="1" type="primary">glnS</name>
    <name type="ordered locus">b0680</name>
    <name type="ordered locus">JW0666</name>
</gene>
<protein>
    <recommendedName>
        <fullName evidence="1">Glutamine--tRNA ligase</fullName>
        <ecNumber evidence="1 2 3 4 5 8">6.1.1.18</ecNumber>
    </recommendedName>
    <alternativeName>
        <fullName evidence="1">Glutaminyl-tRNA synthetase</fullName>
        <shortName evidence="1">GlnRS</shortName>
    </alternativeName>
</protein>
<evidence type="ECO:0000255" key="1">
    <source>
        <dbReference type="HAMAP-Rule" id="MF_00126"/>
    </source>
</evidence>
<evidence type="ECO:0000269" key="2">
    <source>
    </source>
</evidence>
<evidence type="ECO:0000269" key="3">
    <source>
    </source>
</evidence>
<evidence type="ECO:0000269" key="4">
    <source>
    </source>
</evidence>
<evidence type="ECO:0000269" key="5">
    <source>
    </source>
</evidence>
<evidence type="ECO:0000269" key="6">
    <source>
    </source>
</evidence>
<evidence type="ECO:0000269" key="7">
    <source>
    </source>
</evidence>
<evidence type="ECO:0000269" key="8">
    <source>
    </source>
</evidence>
<evidence type="ECO:0000305" key="9"/>
<evidence type="ECO:0000312" key="10">
    <source>
        <dbReference type="EMBL" id="AAA69006.2"/>
    </source>
</evidence>
<evidence type="ECO:0000312" key="11">
    <source>
        <dbReference type="EMBL" id="AAC73774.1"/>
    </source>
</evidence>
<evidence type="ECO:0000312" key="12">
    <source>
        <dbReference type="EMBL" id="BAA35328.1"/>
    </source>
</evidence>
<evidence type="ECO:0007744" key="13">
    <source>
        <dbReference type="PDB" id="1O0B"/>
    </source>
</evidence>
<evidence type="ECO:0007744" key="14">
    <source>
        <dbReference type="PDB" id="1O0C"/>
    </source>
</evidence>
<evidence type="ECO:0007744" key="15">
    <source>
        <dbReference type="PDB" id="1QTQ"/>
    </source>
</evidence>
<evidence type="ECO:0007744" key="16">
    <source>
        <dbReference type="PDB" id="1ZJW"/>
    </source>
</evidence>
<evidence type="ECO:0007744" key="17">
    <source>
        <dbReference type="PDB" id="2RD2"/>
    </source>
</evidence>
<evidence type="ECO:0007744" key="18">
    <source>
        <dbReference type="PDB" id="2RE8"/>
    </source>
</evidence>
<evidence type="ECO:0007744" key="19">
    <source>
        <dbReference type="PDB" id="4JXX"/>
    </source>
</evidence>
<evidence type="ECO:0007744" key="20">
    <source>
        <dbReference type="PDB" id="4JXZ"/>
    </source>
</evidence>
<evidence type="ECO:0007744" key="21">
    <source>
        <dbReference type="PDB" id="4JYZ"/>
    </source>
</evidence>
<evidence type="ECO:0007829" key="22">
    <source>
        <dbReference type="PDB" id="1NYL"/>
    </source>
</evidence>
<evidence type="ECO:0007829" key="23">
    <source>
        <dbReference type="PDB" id="1QTQ"/>
    </source>
</evidence>
<evidence type="ECO:0007829" key="24">
    <source>
        <dbReference type="PDB" id="4JXX"/>
    </source>
</evidence>
<name>SYQ_ECOLI</name>
<accession>P00962</accession>
<accession>Q59403</accession>